<organism>
    <name type="scientific">Neisseria meningitidis serogroup C / serotype 2a (strain ATCC 700532 / DSM 15464 / FAM18)</name>
    <dbReference type="NCBI Taxonomy" id="272831"/>
    <lineage>
        <taxon>Bacteria</taxon>
        <taxon>Pseudomonadati</taxon>
        <taxon>Pseudomonadota</taxon>
        <taxon>Betaproteobacteria</taxon>
        <taxon>Neisseriales</taxon>
        <taxon>Neisseriaceae</taxon>
        <taxon>Neisseria</taxon>
    </lineage>
</organism>
<sequence length="143" mass="15967">MDIQTILEKTLPGLGYELVDFELTAQGTLRVFIDKEGGITVEDCATVSNHLSRVFMVEDIDYKNLEISSPGLDRPLKKAADFVRFAGQNAKIKTRLPIDGQKNFIGKIEGCENDTVTVSFDGKTVQIELGNIDKARLRPEFKF</sequence>
<proteinExistence type="inferred from homology"/>
<gene>
    <name evidence="1" type="primary">rimP</name>
    <name type="ordered locus">NMC1555</name>
</gene>
<protein>
    <recommendedName>
        <fullName evidence="1">Ribosome maturation factor RimP</fullName>
    </recommendedName>
</protein>
<reference key="1">
    <citation type="journal article" date="2007" name="PLoS Genet.">
        <title>Meningococcal genetic variation mechanisms viewed through comparative analysis of serogroup C strain FAM18.</title>
        <authorList>
            <person name="Bentley S.D."/>
            <person name="Vernikos G.S."/>
            <person name="Snyder L.A.S."/>
            <person name="Churcher C."/>
            <person name="Arrowsmith C."/>
            <person name="Chillingworth T."/>
            <person name="Cronin A."/>
            <person name="Davis P.H."/>
            <person name="Holroyd N.E."/>
            <person name="Jagels K."/>
            <person name="Maddison M."/>
            <person name="Moule S."/>
            <person name="Rabbinowitsch E."/>
            <person name="Sharp S."/>
            <person name="Unwin L."/>
            <person name="Whitehead S."/>
            <person name="Quail M.A."/>
            <person name="Achtman M."/>
            <person name="Barrell B.G."/>
            <person name="Saunders N.J."/>
            <person name="Parkhill J."/>
        </authorList>
    </citation>
    <scope>NUCLEOTIDE SEQUENCE [LARGE SCALE GENOMIC DNA]</scope>
    <source>
        <strain>ATCC 700532 / DSM 15464 / FAM18</strain>
    </source>
</reference>
<keyword id="KW-0963">Cytoplasm</keyword>
<keyword id="KW-0690">Ribosome biogenesis</keyword>
<feature type="chain" id="PRO_0000384719" description="Ribosome maturation factor RimP">
    <location>
        <begin position="1"/>
        <end position="143"/>
    </location>
</feature>
<comment type="function">
    <text evidence="1">Required for maturation of 30S ribosomal subunits.</text>
</comment>
<comment type="subcellular location">
    <subcellularLocation>
        <location evidence="1">Cytoplasm</location>
    </subcellularLocation>
</comment>
<comment type="similarity">
    <text evidence="1">Belongs to the RimP family.</text>
</comment>
<evidence type="ECO:0000255" key="1">
    <source>
        <dbReference type="HAMAP-Rule" id="MF_01077"/>
    </source>
</evidence>
<accession>A1KV49</accession>
<dbReference type="EMBL" id="AM421808">
    <property type="protein sequence ID" value="CAM10750.1"/>
    <property type="molecule type" value="Genomic_DNA"/>
</dbReference>
<dbReference type="RefSeq" id="WP_002216731.1">
    <property type="nucleotide sequence ID" value="NC_008767.1"/>
</dbReference>
<dbReference type="SMR" id="A1KV49"/>
<dbReference type="GeneID" id="83616496"/>
<dbReference type="KEGG" id="nmc:NMC1555"/>
<dbReference type="HOGENOM" id="CLU_070525_1_0_4"/>
<dbReference type="Proteomes" id="UP000002286">
    <property type="component" value="Chromosome"/>
</dbReference>
<dbReference type="GO" id="GO:0005829">
    <property type="term" value="C:cytosol"/>
    <property type="evidence" value="ECO:0007669"/>
    <property type="project" value="TreeGrafter"/>
</dbReference>
<dbReference type="GO" id="GO:0000028">
    <property type="term" value="P:ribosomal small subunit assembly"/>
    <property type="evidence" value="ECO:0007669"/>
    <property type="project" value="TreeGrafter"/>
</dbReference>
<dbReference type="GO" id="GO:0006412">
    <property type="term" value="P:translation"/>
    <property type="evidence" value="ECO:0007669"/>
    <property type="project" value="TreeGrafter"/>
</dbReference>
<dbReference type="CDD" id="cd01734">
    <property type="entry name" value="YlxS_C"/>
    <property type="match status" value="1"/>
</dbReference>
<dbReference type="FunFam" id="2.30.30.180:FF:000005">
    <property type="entry name" value="Ribosome maturation factor RimP"/>
    <property type="match status" value="1"/>
</dbReference>
<dbReference type="Gene3D" id="2.30.30.180">
    <property type="entry name" value="Ribosome maturation factor RimP, C-terminal domain"/>
    <property type="match status" value="1"/>
</dbReference>
<dbReference type="Gene3D" id="3.30.300.70">
    <property type="entry name" value="RimP-like superfamily, N-terminal"/>
    <property type="match status" value="1"/>
</dbReference>
<dbReference type="HAMAP" id="MF_01077">
    <property type="entry name" value="RimP"/>
    <property type="match status" value="1"/>
</dbReference>
<dbReference type="InterPro" id="IPR003728">
    <property type="entry name" value="Ribosome_maturation_RimP"/>
</dbReference>
<dbReference type="InterPro" id="IPR028998">
    <property type="entry name" value="RimP_C"/>
</dbReference>
<dbReference type="InterPro" id="IPR036847">
    <property type="entry name" value="RimP_C_sf"/>
</dbReference>
<dbReference type="InterPro" id="IPR028989">
    <property type="entry name" value="RimP_N"/>
</dbReference>
<dbReference type="InterPro" id="IPR035956">
    <property type="entry name" value="RimP_N_sf"/>
</dbReference>
<dbReference type="NCBIfam" id="NF000929">
    <property type="entry name" value="PRK00092.2-1"/>
    <property type="match status" value="1"/>
</dbReference>
<dbReference type="PANTHER" id="PTHR33867">
    <property type="entry name" value="RIBOSOME MATURATION FACTOR RIMP"/>
    <property type="match status" value="1"/>
</dbReference>
<dbReference type="PANTHER" id="PTHR33867:SF1">
    <property type="entry name" value="RIBOSOME MATURATION FACTOR RIMP"/>
    <property type="match status" value="1"/>
</dbReference>
<dbReference type="Pfam" id="PF17384">
    <property type="entry name" value="DUF150_C"/>
    <property type="match status" value="1"/>
</dbReference>
<dbReference type="Pfam" id="PF02576">
    <property type="entry name" value="RimP_N"/>
    <property type="match status" value="1"/>
</dbReference>
<dbReference type="SUPFAM" id="SSF74942">
    <property type="entry name" value="YhbC-like, C-terminal domain"/>
    <property type="match status" value="1"/>
</dbReference>
<dbReference type="SUPFAM" id="SSF75420">
    <property type="entry name" value="YhbC-like, N-terminal domain"/>
    <property type="match status" value="1"/>
</dbReference>
<name>RIMP_NEIMF</name>